<proteinExistence type="inferred from homology"/>
<feature type="chain" id="PRO_1000082283" description="Ribonuclease PH">
    <location>
        <begin position="1"/>
        <end position="238"/>
    </location>
</feature>
<feature type="binding site" evidence="1">
    <location>
        <position position="86"/>
    </location>
    <ligand>
        <name>phosphate</name>
        <dbReference type="ChEBI" id="CHEBI:43474"/>
        <note>substrate</note>
    </ligand>
</feature>
<feature type="binding site" evidence="1">
    <location>
        <begin position="124"/>
        <end position="126"/>
    </location>
    <ligand>
        <name>phosphate</name>
        <dbReference type="ChEBI" id="CHEBI:43474"/>
        <note>substrate</note>
    </ligand>
</feature>
<reference key="1">
    <citation type="submission" date="2007-10" db="EMBL/GenBank/DDBJ databases">
        <title>Brucella canis ATCC 23365 whole genome shotgun sequencing project.</title>
        <authorList>
            <person name="Setubal J.C."/>
            <person name="Bowns C."/>
            <person name="Boyle S."/>
            <person name="Crasta O.R."/>
            <person name="Czar M.J."/>
            <person name="Dharmanolla C."/>
            <person name="Gillespie J.J."/>
            <person name="Kenyon R.W."/>
            <person name="Lu J."/>
            <person name="Mane S."/>
            <person name="Mohapatra S."/>
            <person name="Nagrani S."/>
            <person name="Purkayastha A."/>
            <person name="Rajasimha H.K."/>
            <person name="Shallom J.M."/>
            <person name="Shallom S."/>
            <person name="Shukla M."/>
            <person name="Snyder E.E."/>
            <person name="Sobral B.W."/>
            <person name="Wattam A.R."/>
            <person name="Will R."/>
            <person name="Williams K."/>
            <person name="Yoo H."/>
            <person name="Bruce D."/>
            <person name="Detter C."/>
            <person name="Munk C."/>
            <person name="Brettin T.S."/>
        </authorList>
    </citation>
    <scope>NUCLEOTIDE SEQUENCE [LARGE SCALE GENOMIC DNA]</scope>
    <source>
        <strain>ATCC 23365 / NCTC 10854 / RM-666</strain>
    </source>
</reference>
<dbReference type="EC" id="2.7.7.56" evidence="1"/>
<dbReference type="EMBL" id="CP000872">
    <property type="protein sequence ID" value="ABX61277.1"/>
    <property type="molecule type" value="Genomic_DNA"/>
</dbReference>
<dbReference type="RefSeq" id="WP_002965421.1">
    <property type="nucleotide sequence ID" value="NC_010103.1"/>
</dbReference>
<dbReference type="SMR" id="A9M7B8"/>
<dbReference type="GeneID" id="97534418"/>
<dbReference type="KEGG" id="bcs:BCAN_A0178"/>
<dbReference type="HOGENOM" id="CLU_050858_0_0_5"/>
<dbReference type="PhylomeDB" id="A9M7B8"/>
<dbReference type="Proteomes" id="UP000001385">
    <property type="component" value="Chromosome I"/>
</dbReference>
<dbReference type="GO" id="GO:0000175">
    <property type="term" value="F:3'-5'-RNA exonuclease activity"/>
    <property type="evidence" value="ECO:0007669"/>
    <property type="project" value="UniProtKB-UniRule"/>
</dbReference>
<dbReference type="GO" id="GO:0000049">
    <property type="term" value="F:tRNA binding"/>
    <property type="evidence" value="ECO:0007669"/>
    <property type="project" value="UniProtKB-UniRule"/>
</dbReference>
<dbReference type="GO" id="GO:0009022">
    <property type="term" value="F:tRNA nucleotidyltransferase activity"/>
    <property type="evidence" value="ECO:0007669"/>
    <property type="project" value="UniProtKB-UniRule"/>
</dbReference>
<dbReference type="GO" id="GO:0016075">
    <property type="term" value="P:rRNA catabolic process"/>
    <property type="evidence" value="ECO:0007669"/>
    <property type="project" value="UniProtKB-UniRule"/>
</dbReference>
<dbReference type="GO" id="GO:0006364">
    <property type="term" value="P:rRNA processing"/>
    <property type="evidence" value="ECO:0007669"/>
    <property type="project" value="UniProtKB-KW"/>
</dbReference>
<dbReference type="GO" id="GO:0008033">
    <property type="term" value="P:tRNA processing"/>
    <property type="evidence" value="ECO:0007669"/>
    <property type="project" value="UniProtKB-UniRule"/>
</dbReference>
<dbReference type="CDD" id="cd11362">
    <property type="entry name" value="RNase_PH_bact"/>
    <property type="match status" value="1"/>
</dbReference>
<dbReference type="FunFam" id="3.30.230.70:FF:000003">
    <property type="entry name" value="Ribonuclease PH"/>
    <property type="match status" value="1"/>
</dbReference>
<dbReference type="Gene3D" id="3.30.230.70">
    <property type="entry name" value="GHMP Kinase, N-terminal domain"/>
    <property type="match status" value="1"/>
</dbReference>
<dbReference type="HAMAP" id="MF_00564">
    <property type="entry name" value="RNase_PH"/>
    <property type="match status" value="1"/>
</dbReference>
<dbReference type="InterPro" id="IPR001247">
    <property type="entry name" value="ExoRNase_PH_dom1"/>
</dbReference>
<dbReference type="InterPro" id="IPR015847">
    <property type="entry name" value="ExoRNase_PH_dom2"/>
</dbReference>
<dbReference type="InterPro" id="IPR036345">
    <property type="entry name" value="ExoRNase_PH_dom2_sf"/>
</dbReference>
<dbReference type="InterPro" id="IPR027408">
    <property type="entry name" value="PNPase/RNase_PH_dom_sf"/>
</dbReference>
<dbReference type="InterPro" id="IPR020568">
    <property type="entry name" value="Ribosomal_Su5_D2-typ_SF"/>
</dbReference>
<dbReference type="InterPro" id="IPR050080">
    <property type="entry name" value="RNase_PH"/>
</dbReference>
<dbReference type="InterPro" id="IPR002381">
    <property type="entry name" value="RNase_PH_bac-type"/>
</dbReference>
<dbReference type="InterPro" id="IPR018336">
    <property type="entry name" value="RNase_PH_CS"/>
</dbReference>
<dbReference type="NCBIfam" id="TIGR01966">
    <property type="entry name" value="RNasePH"/>
    <property type="match status" value="1"/>
</dbReference>
<dbReference type="PANTHER" id="PTHR11953">
    <property type="entry name" value="EXOSOME COMPLEX COMPONENT"/>
    <property type="match status" value="1"/>
</dbReference>
<dbReference type="PANTHER" id="PTHR11953:SF0">
    <property type="entry name" value="EXOSOME COMPLEX COMPONENT RRP41"/>
    <property type="match status" value="1"/>
</dbReference>
<dbReference type="Pfam" id="PF01138">
    <property type="entry name" value="RNase_PH"/>
    <property type="match status" value="1"/>
</dbReference>
<dbReference type="Pfam" id="PF03725">
    <property type="entry name" value="RNase_PH_C"/>
    <property type="match status" value="1"/>
</dbReference>
<dbReference type="SUPFAM" id="SSF55666">
    <property type="entry name" value="Ribonuclease PH domain 2-like"/>
    <property type="match status" value="1"/>
</dbReference>
<dbReference type="SUPFAM" id="SSF54211">
    <property type="entry name" value="Ribosomal protein S5 domain 2-like"/>
    <property type="match status" value="1"/>
</dbReference>
<dbReference type="PROSITE" id="PS01277">
    <property type="entry name" value="RIBONUCLEASE_PH"/>
    <property type="match status" value="1"/>
</dbReference>
<sequence>MRPSKRAADEMRAISFERGVSKHAEGSCLVKFGDTHVLCTASLEEKVPGWMRNTGKGWVTAEYGMLPRSTGERMRREAAAGKQGGRTQEIQRLIGRSLRAVVDMQALGEMQITVDCDVIQADGGTRTAAITGGWVALHECLRWMEARQMVRVEKVLKDHVAAISCGIYEGVPVLDLDYAEDSVAETDSNFVMTGKGGIVEIQGTAEGVPFSEEEFGALMKLARSGIDRLVSLQKMAVA</sequence>
<keyword id="KW-0548">Nucleotidyltransferase</keyword>
<keyword id="KW-1185">Reference proteome</keyword>
<keyword id="KW-0694">RNA-binding</keyword>
<keyword id="KW-0698">rRNA processing</keyword>
<keyword id="KW-0808">Transferase</keyword>
<keyword id="KW-0819">tRNA processing</keyword>
<keyword id="KW-0820">tRNA-binding</keyword>
<gene>
    <name evidence="1" type="primary">rph</name>
    <name type="ordered locus">BCAN_A0178</name>
</gene>
<evidence type="ECO:0000255" key="1">
    <source>
        <dbReference type="HAMAP-Rule" id="MF_00564"/>
    </source>
</evidence>
<protein>
    <recommendedName>
        <fullName evidence="1">Ribonuclease PH</fullName>
        <shortName evidence="1">RNase PH</shortName>
        <ecNumber evidence="1">2.7.7.56</ecNumber>
    </recommendedName>
    <alternativeName>
        <fullName evidence="1">tRNA nucleotidyltransferase</fullName>
    </alternativeName>
</protein>
<accession>A9M7B8</accession>
<comment type="function">
    <text evidence="1">Phosphorolytic 3'-5' exoribonuclease that plays an important role in tRNA 3'-end maturation. Removes nucleotide residues following the 3'-CCA terminus of tRNAs; can also add nucleotides to the ends of RNA molecules by using nucleoside diphosphates as substrates, but this may not be physiologically important. Probably plays a role in initiation of 16S rRNA degradation (leading to ribosome degradation) during starvation.</text>
</comment>
<comment type="catalytic activity">
    <reaction evidence="1">
        <text>tRNA(n+1) + phosphate = tRNA(n) + a ribonucleoside 5'-diphosphate</text>
        <dbReference type="Rhea" id="RHEA:10628"/>
        <dbReference type="Rhea" id="RHEA-COMP:17343"/>
        <dbReference type="Rhea" id="RHEA-COMP:17344"/>
        <dbReference type="ChEBI" id="CHEBI:43474"/>
        <dbReference type="ChEBI" id="CHEBI:57930"/>
        <dbReference type="ChEBI" id="CHEBI:173114"/>
        <dbReference type="EC" id="2.7.7.56"/>
    </reaction>
</comment>
<comment type="subunit">
    <text evidence="1">Homohexameric ring arranged as a trimer of dimers.</text>
</comment>
<comment type="similarity">
    <text evidence="1">Belongs to the RNase PH family.</text>
</comment>
<organism>
    <name type="scientific">Brucella canis (strain ATCC 23365 / NCTC 10854 / RM-666)</name>
    <dbReference type="NCBI Taxonomy" id="483179"/>
    <lineage>
        <taxon>Bacteria</taxon>
        <taxon>Pseudomonadati</taxon>
        <taxon>Pseudomonadota</taxon>
        <taxon>Alphaproteobacteria</taxon>
        <taxon>Hyphomicrobiales</taxon>
        <taxon>Brucellaceae</taxon>
        <taxon>Brucella/Ochrobactrum group</taxon>
        <taxon>Brucella</taxon>
    </lineage>
</organism>
<name>RNPH_BRUC2</name>